<evidence type="ECO:0000255" key="1"/>
<evidence type="ECO:0000255" key="2">
    <source>
        <dbReference type="PROSITE-ProRule" id="PRU00979"/>
    </source>
</evidence>
<evidence type="ECO:0000256" key="3">
    <source>
        <dbReference type="SAM" id="MobiDB-lite"/>
    </source>
</evidence>
<evidence type="ECO:0000269" key="4">
    <source>
    </source>
</evidence>
<evidence type="ECO:0000305" key="5"/>
<organism>
    <name type="scientific">Rattus norvegicus</name>
    <name type="common">Rat</name>
    <dbReference type="NCBI Taxonomy" id="10116"/>
    <lineage>
        <taxon>Eukaryota</taxon>
        <taxon>Metazoa</taxon>
        <taxon>Chordata</taxon>
        <taxon>Craniata</taxon>
        <taxon>Vertebrata</taxon>
        <taxon>Euteleostomi</taxon>
        <taxon>Mammalia</taxon>
        <taxon>Eutheria</taxon>
        <taxon>Euarchontoglires</taxon>
        <taxon>Glires</taxon>
        <taxon>Rodentia</taxon>
        <taxon>Myomorpha</taxon>
        <taxon>Muroidea</taxon>
        <taxon>Muridae</taxon>
        <taxon>Murinae</taxon>
        <taxon>Rattus</taxon>
    </lineage>
</organism>
<sequence length="430" mass="47775">MKLITILLLCSRLLPSLAQEEGAQELNCNDETVFQAVDTALKKYNAELESGNQFVLYRVTEGTKKDGAETLYSFKYQIKEGNCSVQSGLTWQDCDFKDAEEAATGECTTTLGKKENKFSVATQICNITPGKGPKKTEEDLCVGCFQPIPMDSSDLKPVLKHAVEHFNNNTKHTHLFALREVKSAHSQVVAGMNYKIIYSIVQTNCSKEDFPSLREDCVPLPYGDHGECTGHTHVDIHNTIAGFSQSCDLYPGDDLFELLPKNCRGCPREIPVDSPELKEALGHSIAQLNAQHNHIFYFKIDTVKKATSQVVAGVIYVIEFIARETNCSKQSKTELTADCETKHLGQSLNCNANVYMRPWENKVVPTVRCQALDMMISRPPGFSPFRLVRVQETKEGTTRLLNSCEYKGRLSKARAGPAPDHQAEASTVTP</sequence>
<reference key="1">
    <citation type="journal article" date="1985" name="J. Biol. Chem.">
        <title>Primary structures of the mRNAs encoding the rat precursors for bradykinin and T-kinin. Structural relationship of kininogens with major acute phase protein and alpha 1-cysteine proteinase inhibitor.</title>
        <authorList>
            <person name="Furuto-Kato S."/>
            <person name="Matsumoto A."/>
            <person name="Kitamura N."/>
            <person name="Nakanishi S."/>
        </authorList>
    </citation>
    <scope>NUCLEOTIDE SEQUENCE [MRNA]</scope>
</reference>
<reference key="2">
    <citation type="journal article" date="1989" name="Gene">
        <title>Primary structure of a gene encoding rat T-kininogen.</title>
        <authorList>
            <person name="Anderson K.P."/>
            <person name="Croyle M.L."/>
            <person name="Lingrel J.B."/>
        </authorList>
    </citation>
    <scope>NUCLEOTIDE SEQUENCE [GENOMIC DNA]</scope>
    <source>
        <strain>Sprague-Dawley</strain>
    </source>
</reference>
<reference key="3">
    <citation type="journal article" date="1987" name="J. Biol. Chem.">
        <title>Structure and expression of the genes for major acute phase alpha 1-protein (thiostatin) and kininogen in the rat.</title>
        <authorList>
            <person name="Fung W.-P."/>
            <person name="Schreiber G."/>
        </authorList>
    </citation>
    <scope>NUCLEOTIDE SEQUENCE [GENOMIC DNA] OF 1-65</scope>
</reference>
<reference key="4">
    <citation type="journal article" date="1987" name="J. Biol. Chem.">
        <title>Differing utilization of homologous transcription initiation sites of rat K and T kininogen genes under inflammation condition.</title>
        <authorList>
            <person name="Kageyama R."/>
            <person name="Kitamura N."/>
            <person name="Ohkubo H."/>
            <person name="Nakanishi S."/>
        </authorList>
    </citation>
    <scope>NUCLEOTIDE SEQUENCE [GENOMIC DNA] OF 1-48</scope>
    <source>
        <strain>Wistar</strain>
        <tissue>Liver</tissue>
    </source>
</reference>
<reference key="5">
    <citation type="journal article" date="1985" name="FEBS Lett.">
        <title>Major acute phase alpha 1-protein of the rat is homologous to bovine kininogen and contains the sequence for bradykinin: its synthesis is regulated at the mRNA level.</title>
        <authorList>
            <person name="Cole T."/>
            <person name="Inglis A.S."/>
            <person name="Roxburgh C.M."/>
            <person name="Howlett G.J."/>
            <person name="Schreiber G."/>
        </authorList>
    </citation>
    <scope>NUCLEOTIDE SEQUENCE [MRNA] OF 7-430</scope>
</reference>
<reference key="6">
    <citation type="journal article" date="1988" name="J. Biol. Chem.">
        <title>Purification and characterization of rat T-kininogens isolated from plasma of adjuvant-treated rats. Identification of three kinds of T-kininogens.</title>
        <authorList>
            <person name="Enjyoji K."/>
            <person name="Kato H."/>
            <person name="Hayashi I."/>
            <person name="Oh-ishi S."/>
            <person name="Iwanaga S."/>
        </authorList>
    </citation>
    <scope>PROTEIN SEQUENCE OF 19-48 AND 376-430</scope>
    <scope>PYROGLUTAMATE FORMATION AT GLN-19</scope>
</reference>
<reference key="7">
    <citation type="journal article" date="1990" name="Jpn. J. Cancer Res.">
        <title>Identification of a protein increasing in serum of Nagase analbuminemic rats bearing intestinal tumors as an isotype of T-kininogen.</title>
        <authorList>
            <person name="Kanda S."/>
            <person name="Sugiyama K."/>
            <person name="Takahashi M."/>
            <person name="Shumiya S."/>
            <person name="Tomino S."/>
            <person name="Nagase S."/>
        </authorList>
    </citation>
    <scope>NUCLEOTIDE SEQUENCE [MRNA] OF 330-430</scope>
</reference>
<reference key="8">
    <citation type="journal article" date="1995" name="Arch. Biochem. Biophys.">
        <title>Identification of several isoforms of T-kininogen expressed in the liver of aging rats.</title>
        <authorList>
            <person name="Sierra F."/>
            <person name="Walter R."/>
            <person name="Vautravers P."/>
            <person name="Guigoz Y."/>
        </authorList>
    </citation>
    <scope>NUCLEOTIDE SEQUENCE [MRNA] OF 340-430</scope>
</reference>
<reference key="9">
    <citation type="journal article" date="1987" name="J. Biol. Chem.">
        <title>Differing expression patterns and evolution of the rat kininogen gene family.</title>
        <authorList>
            <person name="Kitagawa H."/>
            <person name="Kitamura N."/>
            <person name="Hayashida H."/>
            <person name="Miyata T."/>
            <person name="Nakanishi S."/>
        </authorList>
    </citation>
    <scope>NUCLEOTIDE SEQUENCE [MRNA] OF 375-430</scope>
</reference>
<reference key="10">
    <citation type="journal article" date="1988" name="J. Biol. Chem.">
        <title>Purification and characterization of two kinds of low molecular weight kininogens from rat (non-inflamed) plasma. One resistant and the second sensitive to rat glandular kallikreins.</title>
        <authorList>
            <person name="Enjyoji K."/>
            <person name="Kato H."/>
            <person name="Hayashi I."/>
            <person name="Oh-ishi S."/>
            <person name="Iwanaga S."/>
        </authorList>
    </citation>
    <scope>PROTEIN SEQUENCE OF 376-430</scope>
</reference>
<gene>
    <name type="primary">Map1</name>
</gene>
<feature type="signal peptide" evidence="4">
    <location>
        <begin position="1"/>
        <end position="18"/>
    </location>
</feature>
<feature type="chain" id="PRO_0000006699" description="T-kininogen 1">
    <location>
        <begin position="19"/>
        <end position="430"/>
    </location>
</feature>
<feature type="chain" id="PRO_0000006700" description="T-kininogen 1 heavy chain">
    <location>
        <begin position="19"/>
        <end position="375"/>
    </location>
</feature>
<feature type="peptide" id="PRO_0000006701" description="T-kinin">
    <location>
        <begin position="376"/>
        <end position="386"/>
    </location>
</feature>
<feature type="chain" id="PRO_0000006702" description="T-kininogen 1 light chain">
    <location>
        <begin position="387"/>
        <end position="430"/>
    </location>
</feature>
<feature type="domain" description="Cystatin kininogen-type 1" evidence="2">
    <location>
        <begin position="28"/>
        <end position="131"/>
    </location>
</feature>
<feature type="domain" description="Cystatin kininogen-type 2" evidence="2">
    <location>
        <begin position="150"/>
        <end position="253"/>
    </location>
</feature>
<feature type="domain" description="Cystatin kininogen-type 3" evidence="2">
    <location>
        <begin position="272"/>
        <end position="375"/>
    </location>
</feature>
<feature type="region of interest" description="Disordered" evidence="3">
    <location>
        <begin position="411"/>
        <end position="430"/>
    </location>
</feature>
<feature type="modified residue" description="Pyrrolidone carboxylic acid" evidence="4">
    <location>
        <position position="19"/>
    </location>
</feature>
<feature type="glycosylation site" description="N-linked (GlcNAc...) asparagine" evidence="1">
    <location>
        <position position="82"/>
    </location>
</feature>
<feature type="glycosylation site" description="N-linked (GlcNAc...) asparagine" evidence="1">
    <location>
        <position position="168"/>
    </location>
</feature>
<feature type="glycosylation site" description="N-linked (GlcNAc...) asparagine" evidence="1">
    <location>
        <position position="204"/>
    </location>
</feature>
<feature type="glycosylation site" description="N-linked (GlcNAc...) asparagine" evidence="1">
    <location>
        <position position="326"/>
    </location>
</feature>
<feature type="disulfide bond" description="Interchain (between heavy and light chains)" evidence="2">
    <location>
        <begin position="28"/>
        <end position="404"/>
    </location>
</feature>
<feature type="disulfide bond" evidence="2">
    <location>
        <begin position="83"/>
        <end position="94"/>
    </location>
</feature>
<feature type="disulfide bond" evidence="2">
    <location>
        <begin position="107"/>
        <end position="125"/>
    </location>
</feature>
<feature type="disulfide bond" evidence="2">
    <location>
        <begin position="141"/>
        <end position="144"/>
    </location>
</feature>
<feature type="disulfide bond" evidence="2">
    <location>
        <begin position="205"/>
        <end position="217"/>
    </location>
</feature>
<feature type="disulfide bond" evidence="2">
    <location>
        <begin position="228"/>
        <end position="247"/>
    </location>
</feature>
<feature type="disulfide bond" evidence="2">
    <location>
        <begin position="263"/>
        <end position="266"/>
    </location>
</feature>
<feature type="disulfide bond" evidence="2">
    <location>
        <begin position="327"/>
        <end position="339"/>
    </location>
</feature>
<feature type="disulfide bond" evidence="2">
    <location>
        <begin position="350"/>
        <end position="369"/>
    </location>
</feature>
<feature type="sequence conflict" description="In Ref. 5; CAA26162." evidence="5" ref="5">
    <original>L</original>
    <variation>V</variation>
    <location>
        <position position="7"/>
    </location>
</feature>
<feature type="sequence conflict" description="In Ref. 6; AA sequence." evidence="5" ref="6">
    <original>Q</original>
    <variation>E</variation>
    <location>
        <position position="19"/>
    </location>
</feature>
<feature type="sequence conflict" description="In Ref. 1; AAA41489." evidence="5" ref="1">
    <original>E</original>
    <variation>K</variation>
    <location>
        <position position="61"/>
    </location>
</feature>
<feature type="sequence conflict" description="In Ref. 2; no nucleotide entry." evidence="5" ref="2">
    <original>K</original>
    <variation>R</variation>
    <location>
        <position position="114"/>
    </location>
</feature>
<feature type="sequence conflict" description="In Ref. 1; AAA41489." evidence="5" ref="1">
    <original>F</original>
    <variation>S</variation>
    <location>
        <position position="166"/>
    </location>
</feature>
<feature type="sequence conflict" description="In Ref. 2; no nucleotide entry." evidence="5" ref="2">
    <original>REV</original>
    <variation>TKI</variation>
    <location>
        <begin position="179"/>
        <end position="181"/>
    </location>
</feature>
<feature type="sequence conflict" description="In Ref. 2; no nucleotide entry." evidence="5" ref="2">
    <original>S</original>
    <variation>F</variation>
    <location>
        <position position="212"/>
    </location>
</feature>
<feature type="sequence conflict" description="In Ref. 5; CAA26162." evidence="5" ref="5">
    <original>R</original>
    <variation>H</variation>
    <location>
        <position position="214"/>
    </location>
</feature>
<feature type="sequence conflict" description="In Ref. 2; no nucleotide entry." evidence="5" ref="2">
    <original>E</original>
    <variation>S</variation>
    <location>
        <position position="257"/>
    </location>
</feature>
<feature type="sequence conflict" description="In Ref. 5; CAA26162." evidence="5" ref="5">
    <original>Q</original>
    <variation>R</variation>
    <location>
        <position position="287"/>
    </location>
</feature>
<feature type="sequence conflict" description="In Ref. 2; no nucleotide entry." evidence="5" ref="2">
    <original>R</original>
    <variation>Q</variation>
    <location>
        <position position="389"/>
    </location>
</feature>
<feature type="sequence conflict" description="In Ref. 2; no nucleotide entry and 5; CAA26162." evidence="5" ref="2 5">
    <original>R</original>
    <variation>G</variation>
    <location>
        <position position="414"/>
    </location>
</feature>
<feature type="sequence conflict" description="In Ref. 5; CAA26162." evidence="5" ref="5">
    <original>D</original>
    <variation>E</variation>
    <location>
        <position position="420"/>
    </location>
</feature>
<feature type="sequence conflict" description="In Ref. 5; CAA26162 and 7; no nucleotide entry." evidence="5" ref="5 7">
    <original>H</original>
    <variation>R</variation>
    <location>
        <position position="421"/>
    </location>
</feature>
<feature type="sequence conflict" description="In Ref. 1; AAA41489, 6; AA sequence, 8, 9 and 10; AA sequence." evidence="5" ref="1 6 8 9 10">
    <original>P</original>
    <variation>S</variation>
    <location>
        <position position="430"/>
    </location>
</feature>
<dbReference type="EMBL" id="M11883">
    <property type="protein sequence ID" value="AAA41489.1"/>
    <property type="molecule type" value="mRNA"/>
</dbReference>
<dbReference type="EMBL" id="M16454">
    <property type="protein sequence ID" value="AAA41568.1"/>
    <property type="molecule type" value="Genomic_DNA"/>
</dbReference>
<dbReference type="EMBL" id="M14356">
    <property type="protein sequence ID" value="AAA41492.1"/>
    <property type="molecule type" value="Genomic_DNA"/>
</dbReference>
<dbReference type="EMBL" id="X02299">
    <property type="protein sequence ID" value="CAA26162.1"/>
    <property type="status" value="ALT_SEQ"/>
    <property type="molecule type" value="mRNA"/>
</dbReference>
<dbReference type="PIR" id="A01285">
    <property type="entry name" value="KGRTM"/>
</dbReference>
<dbReference type="PIR" id="A01286">
    <property type="entry name" value="KGRTT1"/>
</dbReference>
<dbReference type="PIR" id="A23897">
    <property type="entry name" value="A23897"/>
</dbReference>
<dbReference type="PIR" id="A27115">
    <property type="entry name" value="A27115"/>
</dbReference>
<dbReference type="SMR" id="P01048"/>
<dbReference type="MEROPS" id="I25.019"/>
<dbReference type="GlyConnect" id="604">
    <property type="glycosylation" value="6 N-Linked glycans"/>
</dbReference>
<dbReference type="GlyCosmos" id="P01048">
    <property type="glycosylation" value="4 sites, 11 glycans"/>
</dbReference>
<dbReference type="GlyGen" id="P01048">
    <property type="glycosylation" value="5 sites, 11 N-linked glycans (1 site)"/>
</dbReference>
<dbReference type="PhosphoSitePlus" id="P01048"/>
<dbReference type="jPOST" id="P01048"/>
<dbReference type="AGR" id="RGD:2980"/>
<dbReference type="InParanoid" id="P01048"/>
<dbReference type="PhylomeDB" id="P01048"/>
<dbReference type="PRO" id="PR:P01048"/>
<dbReference type="Proteomes" id="UP000002494">
    <property type="component" value="Unplaced"/>
</dbReference>
<dbReference type="GO" id="GO:0005576">
    <property type="term" value="C:extracellular region"/>
    <property type="evidence" value="ECO:0000318"/>
    <property type="project" value="GO_Central"/>
</dbReference>
<dbReference type="GO" id="GO:0004869">
    <property type="term" value="F:cysteine-type endopeptidase inhibitor activity"/>
    <property type="evidence" value="ECO:0000318"/>
    <property type="project" value="GO_Central"/>
</dbReference>
<dbReference type="GO" id="GO:0006953">
    <property type="term" value="P:acute-phase response"/>
    <property type="evidence" value="ECO:0007669"/>
    <property type="project" value="UniProtKB-KW"/>
</dbReference>
<dbReference type="GO" id="GO:0030195">
    <property type="term" value="P:negative regulation of blood coagulation"/>
    <property type="evidence" value="ECO:0000318"/>
    <property type="project" value="GO_Central"/>
</dbReference>
<dbReference type="GO" id="GO:0007162">
    <property type="term" value="P:negative regulation of cell adhesion"/>
    <property type="evidence" value="ECO:0000318"/>
    <property type="project" value="GO_Central"/>
</dbReference>
<dbReference type="GO" id="GO:0042311">
    <property type="term" value="P:vasodilation"/>
    <property type="evidence" value="ECO:0007669"/>
    <property type="project" value="UniProtKB-KW"/>
</dbReference>
<dbReference type="CDD" id="cd00042">
    <property type="entry name" value="CY"/>
    <property type="match status" value="3"/>
</dbReference>
<dbReference type="FunFam" id="3.10.450.10:FF:000002">
    <property type="entry name" value="Kininogen 1"/>
    <property type="match status" value="2"/>
</dbReference>
<dbReference type="FunFam" id="3.10.450.10:FF:000008">
    <property type="entry name" value="Kininogen 1"/>
    <property type="match status" value="1"/>
</dbReference>
<dbReference type="Gene3D" id="3.10.450.10">
    <property type="match status" value="3"/>
</dbReference>
<dbReference type="InterPro" id="IPR000010">
    <property type="entry name" value="Cystatin_dom"/>
</dbReference>
<dbReference type="InterPro" id="IPR046350">
    <property type="entry name" value="Cystatin_sf"/>
</dbReference>
<dbReference type="InterPro" id="IPR027358">
    <property type="entry name" value="Kininogen-type_cystatin_dom"/>
</dbReference>
<dbReference type="InterPro" id="IPR050735">
    <property type="entry name" value="Kininogen_Fetuin_HRG"/>
</dbReference>
<dbReference type="InterPro" id="IPR018073">
    <property type="entry name" value="Prot_inh_cystat_CS"/>
</dbReference>
<dbReference type="PANTHER" id="PTHR13814">
    <property type="entry name" value="FETUIN"/>
    <property type="match status" value="1"/>
</dbReference>
<dbReference type="PANTHER" id="PTHR13814:SF12">
    <property type="entry name" value="KININOGEN-1"/>
    <property type="match status" value="1"/>
</dbReference>
<dbReference type="Pfam" id="PF00031">
    <property type="entry name" value="Cystatin"/>
    <property type="match status" value="3"/>
</dbReference>
<dbReference type="SMART" id="SM00043">
    <property type="entry name" value="CY"/>
    <property type="match status" value="3"/>
</dbReference>
<dbReference type="SUPFAM" id="SSF54403">
    <property type="entry name" value="Cystatin/monellin"/>
    <property type="match status" value="3"/>
</dbReference>
<dbReference type="PROSITE" id="PS00287">
    <property type="entry name" value="CYSTATIN"/>
    <property type="match status" value="2"/>
</dbReference>
<dbReference type="PROSITE" id="PS51647">
    <property type="entry name" value="CYSTATIN_KININOGEN"/>
    <property type="match status" value="3"/>
</dbReference>
<comment type="function">
    <text>Kininogens are plasma glycoproteins with a number of functions: (1) as precursor of the active peptide bradykinin they effect smooth muscle contraction, induction of hypotension and increase of vascular permeability. (2) They play a role in blood coagulation by helping to position optimally prekallikrein and factor XI next to factor XII. (3) They are inhibitor of thiol proteases.</text>
</comment>
<comment type="subcellular location">
    <subcellularLocation>
        <location>Secreted</location>
        <location>Extracellular space</location>
    </subcellularLocation>
</comment>
<comment type="tissue specificity">
    <text>Plasma.</text>
</comment>
<comment type="induction">
    <text>In response to an inflammatory stimulant. T-kininogen II synthesis is induced and the plasma concentration of T-kininogen I is raised.</text>
</comment>
<comment type="PTM">
    <text>As T-kinin is preceded by a Met instead of an Arg or Lys, it is not released from its precursor by either tissue or plasma kallikrein.</text>
</comment>
<comment type="miscellaneous">
    <text>Rats express four types of kininogens: the classical HMW and LMW kininogens produced by alternative splicing of the same gene, and two additional LMW-like kininogens: T-I and T-II.</text>
</comment>
<name>KNT1_RAT</name>
<keyword id="KW-0011">Acute phase</keyword>
<keyword id="KW-0903">Direct protein sequencing</keyword>
<keyword id="KW-1015">Disulfide bond</keyword>
<keyword id="KW-0325">Glycoprotein</keyword>
<keyword id="KW-0646">Protease inhibitor</keyword>
<keyword id="KW-0873">Pyrrolidone carboxylic acid</keyword>
<keyword id="KW-1185">Reference proteome</keyword>
<keyword id="KW-0677">Repeat</keyword>
<keyword id="KW-0964">Secreted</keyword>
<keyword id="KW-0732">Signal</keyword>
<keyword id="KW-0789">Thiol protease inhibitor</keyword>
<keyword id="KW-0838">Vasoactive</keyword>
<keyword id="KW-0840">Vasodilator</keyword>
<protein>
    <recommendedName>
        <fullName>T-kininogen 1</fullName>
    </recommendedName>
    <alternativeName>
        <fullName>Alpha-1-MAP</fullName>
    </alternativeName>
    <alternativeName>
        <fullName>Major acute phase protein</fullName>
    </alternativeName>
    <alternativeName>
        <fullName>T-kininogen I</fullName>
    </alternativeName>
    <alternativeName>
        <fullName>Thiostatin</fullName>
    </alternativeName>
    <component>
        <recommendedName>
            <fullName>T-kininogen 1 heavy chain</fullName>
        </recommendedName>
        <alternativeName>
            <fullName>T-kininogen I heavy chain</fullName>
        </alternativeName>
    </component>
    <component>
        <recommendedName>
            <fullName>T-kinin</fullName>
        </recommendedName>
    </component>
    <component>
        <recommendedName>
            <fullName>T-kininogen 1 light chain</fullName>
        </recommendedName>
        <alternativeName>
            <fullName>T-kininogen I light chain</fullName>
        </alternativeName>
    </component>
</protein>
<accession>P01048</accession>
<accession>P04081</accession>
<accession>Q6LDW3</accession>
<proteinExistence type="evidence at protein level"/>